<name>Y4HK_SINFN</name>
<proteinExistence type="inferred from homology"/>
<protein>
    <recommendedName>
        <fullName>Probable membrane transporter protein y4hK</fullName>
    </recommendedName>
</protein>
<sequence>MDTEAIGLAIAFFVIALAYAAVGQAGASGYIAAMALSGFSPLAIKPTALALNLMVSAIGTAQFLKVGQVSWRNVYPFAILGFPASALGGSVHLPERVYHPVLGLILVVSAIQMARSALRKSALVITIPKTPPLHAALITGAVIGFVSGTTGSGGGVFLAPVILFKNWGTAHQTAATTAVYNLMNSTAALIGACASWNALPNFLPWWLIAVAAGGSIGALIGSRYLSASWLRVILSVLLMVSGLKLLW</sequence>
<feature type="chain" id="PRO_0000200849" description="Probable membrane transporter protein y4hK">
    <location>
        <begin position="1"/>
        <end position="247"/>
    </location>
</feature>
<feature type="transmembrane region" description="Helical" evidence="1">
    <location>
        <begin position="5"/>
        <end position="25"/>
    </location>
</feature>
<feature type="transmembrane region" description="Helical" evidence="1">
    <location>
        <begin position="31"/>
        <end position="51"/>
    </location>
</feature>
<feature type="transmembrane region" description="Helical" evidence="1">
    <location>
        <begin position="74"/>
        <end position="94"/>
    </location>
</feature>
<feature type="transmembrane region" description="Helical" evidence="1">
    <location>
        <begin position="121"/>
        <end position="141"/>
    </location>
</feature>
<feature type="transmembrane region" description="Helical" evidence="1">
    <location>
        <begin position="202"/>
        <end position="222"/>
    </location>
</feature>
<feature type="transmembrane region" description="Helical" evidence="1">
    <location>
        <begin position="227"/>
        <end position="247"/>
    </location>
</feature>
<organism>
    <name type="scientific">Sinorhizobium fredii (strain NBRC 101917 / NGR234)</name>
    <dbReference type="NCBI Taxonomy" id="394"/>
    <lineage>
        <taxon>Bacteria</taxon>
        <taxon>Pseudomonadati</taxon>
        <taxon>Pseudomonadota</taxon>
        <taxon>Alphaproteobacteria</taxon>
        <taxon>Hyphomicrobiales</taxon>
        <taxon>Rhizobiaceae</taxon>
        <taxon>Sinorhizobium/Ensifer group</taxon>
        <taxon>Sinorhizobium</taxon>
    </lineage>
</organism>
<keyword id="KW-1003">Cell membrane</keyword>
<keyword id="KW-0472">Membrane</keyword>
<keyword id="KW-0614">Plasmid</keyword>
<keyword id="KW-1185">Reference proteome</keyword>
<keyword id="KW-0812">Transmembrane</keyword>
<keyword id="KW-1133">Transmembrane helix</keyword>
<keyword id="KW-0813">Transport</keyword>
<comment type="subcellular location">
    <subcellularLocation>
        <location evidence="2">Cell membrane</location>
        <topology evidence="2">Multi-pass membrane protein</topology>
    </subcellularLocation>
</comment>
<comment type="similarity">
    <text evidence="2">Belongs to the 4-toluene sulfonate uptake permease (TSUP) (TC 2.A.102) family.</text>
</comment>
<evidence type="ECO:0000255" key="1"/>
<evidence type="ECO:0000305" key="2"/>
<reference key="1">
    <citation type="journal article" date="1997" name="Nature">
        <title>Molecular basis of symbiosis between Rhizobium and legumes.</title>
        <authorList>
            <person name="Freiberg C.A."/>
            <person name="Fellay R."/>
            <person name="Bairoch A."/>
            <person name="Broughton W.J."/>
            <person name="Rosenthal A."/>
            <person name="Perret X."/>
        </authorList>
    </citation>
    <scope>NUCLEOTIDE SEQUENCE [LARGE SCALE GENOMIC DNA]</scope>
    <source>
        <strain>NBRC 101917 / NGR234</strain>
    </source>
</reference>
<reference key="2">
    <citation type="journal article" date="2009" name="Appl. Environ. Microbiol.">
        <title>Rhizobium sp. strain NGR234 possesses a remarkable number of secretion systems.</title>
        <authorList>
            <person name="Schmeisser C."/>
            <person name="Liesegang H."/>
            <person name="Krysciak D."/>
            <person name="Bakkou N."/>
            <person name="Le Quere A."/>
            <person name="Wollherr A."/>
            <person name="Heinemeyer I."/>
            <person name="Morgenstern B."/>
            <person name="Pommerening-Roeser A."/>
            <person name="Flores M."/>
            <person name="Palacios R."/>
            <person name="Brenner S."/>
            <person name="Gottschalk G."/>
            <person name="Schmitz R.A."/>
            <person name="Broughton W.J."/>
            <person name="Perret X."/>
            <person name="Strittmatter A.W."/>
            <person name="Streit W.R."/>
        </authorList>
    </citation>
    <scope>NUCLEOTIDE SEQUENCE [LARGE SCALE GENOMIC DNA]</scope>
    <source>
        <strain>NBRC 101917 / NGR234</strain>
    </source>
</reference>
<dbReference type="EMBL" id="U00090">
    <property type="protein sequence ID" value="AAB92449.1"/>
    <property type="molecule type" value="Genomic_DNA"/>
</dbReference>
<dbReference type="PIR" id="T10845">
    <property type="entry name" value="T10845"/>
</dbReference>
<dbReference type="RefSeq" id="NP_443887.1">
    <property type="nucleotide sequence ID" value="NC_000914.2"/>
</dbReference>
<dbReference type="RefSeq" id="WP_010875353.1">
    <property type="nucleotide sequence ID" value="NC_000914.2"/>
</dbReference>
<dbReference type="KEGG" id="rhi:NGR_a03390"/>
<dbReference type="eggNOG" id="COG0730">
    <property type="taxonomic scope" value="Bacteria"/>
</dbReference>
<dbReference type="HOGENOM" id="CLU_045498_4_0_5"/>
<dbReference type="OrthoDB" id="560496at2"/>
<dbReference type="Proteomes" id="UP000001054">
    <property type="component" value="Plasmid pNGR234a"/>
</dbReference>
<dbReference type="GO" id="GO:0005886">
    <property type="term" value="C:plasma membrane"/>
    <property type="evidence" value="ECO:0007669"/>
    <property type="project" value="UniProtKB-SubCell"/>
</dbReference>
<dbReference type="InterPro" id="IPR002781">
    <property type="entry name" value="TM_pro_TauE-like"/>
</dbReference>
<dbReference type="InterPro" id="IPR051598">
    <property type="entry name" value="TSUP/Inactive_protease-like"/>
</dbReference>
<dbReference type="PANTHER" id="PTHR43701">
    <property type="entry name" value="MEMBRANE TRANSPORTER PROTEIN MJ0441-RELATED"/>
    <property type="match status" value="1"/>
</dbReference>
<dbReference type="PANTHER" id="PTHR43701:SF5">
    <property type="entry name" value="MEMBRANE TRANSPORTER PROTEIN-RELATED"/>
    <property type="match status" value="1"/>
</dbReference>
<dbReference type="Pfam" id="PF01925">
    <property type="entry name" value="TauE"/>
    <property type="match status" value="1"/>
</dbReference>
<accession>P55478</accession>
<geneLocation type="plasmid">
    <name>sym pNGR234a</name>
</geneLocation>
<gene>
    <name type="ordered locus">NGR_a03390</name>
    <name type="ORF">y4hK</name>
</gene>